<protein>
    <recommendedName>
        <fullName evidence="1">Large ribosomal subunit protein bL27</fullName>
    </recommendedName>
    <alternativeName>
        <fullName evidence="3">50S ribosomal protein L27</fullName>
    </alternativeName>
</protein>
<accession>Q9Z807</accession>
<accession>Q9JQ34</accession>
<proteinExistence type="inferred from homology"/>
<reference key="1">
    <citation type="journal article" date="1999" name="Nat. Genet.">
        <title>Comparative genomes of Chlamydia pneumoniae and C. trachomatis.</title>
        <authorList>
            <person name="Kalman S."/>
            <person name="Mitchell W.P."/>
            <person name="Marathe R."/>
            <person name="Lammel C.J."/>
            <person name="Fan J."/>
            <person name="Hyman R.W."/>
            <person name="Olinger L."/>
            <person name="Grimwood J."/>
            <person name="Davis R.W."/>
            <person name="Stephens R.S."/>
        </authorList>
    </citation>
    <scope>NUCLEOTIDE SEQUENCE [LARGE SCALE GENOMIC DNA]</scope>
    <source>
        <strain>CWL029</strain>
    </source>
</reference>
<reference key="2">
    <citation type="journal article" date="2000" name="Nucleic Acids Res.">
        <title>Genome sequences of Chlamydia trachomatis MoPn and Chlamydia pneumoniae AR39.</title>
        <authorList>
            <person name="Read T.D."/>
            <person name="Brunham R.C."/>
            <person name="Shen C."/>
            <person name="Gill S.R."/>
            <person name="Heidelberg J.F."/>
            <person name="White O."/>
            <person name="Hickey E.K."/>
            <person name="Peterson J.D."/>
            <person name="Utterback T.R."/>
            <person name="Berry K.J."/>
            <person name="Bass S."/>
            <person name="Linher K.D."/>
            <person name="Weidman J.F."/>
            <person name="Khouri H.M."/>
            <person name="Craven B."/>
            <person name="Bowman C."/>
            <person name="Dodson R.J."/>
            <person name="Gwinn M.L."/>
            <person name="Nelson W.C."/>
            <person name="DeBoy R.T."/>
            <person name="Kolonay J.F."/>
            <person name="McClarty G."/>
            <person name="Salzberg S.L."/>
            <person name="Eisen J.A."/>
            <person name="Fraser C.M."/>
        </authorList>
    </citation>
    <scope>NUCLEOTIDE SEQUENCE [LARGE SCALE GENOMIC DNA]</scope>
    <source>
        <strain>AR39</strain>
    </source>
</reference>
<reference key="3">
    <citation type="journal article" date="2000" name="Nucleic Acids Res.">
        <title>Comparison of whole genome sequences of Chlamydia pneumoniae J138 from Japan and CWL029 from USA.</title>
        <authorList>
            <person name="Shirai M."/>
            <person name="Hirakawa H."/>
            <person name="Kimoto M."/>
            <person name="Tabuchi M."/>
            <person name="Kishi F."/>
            <person name="Ouchi K."/>
            <person name="Shiba T."/>
            <person name="Ishii K."/>
            <person name="Hattori M."/>
            <person name="Kuhara S."/>
            <person name="Nakazawa T."/>
        </authorList>
    </citation>
    <scope>NUCLEOTIDE SEQUENCE [LARGE SCALE GENOMIC DNA]</scope>
    <source>
        <strain>J138</strain>
    </source>
</reference>
<reference key="4">
    <citation type="submission" date="2002-05" db="EMBL/GenBank/DDBJ databases">
        <title>The genome sequence of Chlamydia pneumoniae TW183 and comparison with other Chlamydia strains based on whole genome sequence analysis.</title>
        <authorList>
            <person name="Geng M.M."/>
            <person name="Schuhmacher A."/>
            <person name="Muehldorfer I."/>
            <person name="Bensch K.W."/>
            <person name="Schaefer K.P."/>
            <person name="Schneider S."/>
            <person name="Pohl T."/>
            <person name="Essig A."/>
            <person name="Marre R."/>
            <person name="Melchers K."/>
        </authorList>
    </citation>
    <scope>NUCLEOTIDE SEQUENCE [LARGE SCALE GENOMIC DNA]</scope>
    <source>
        <strain>TW-183</strain>
    </source>
</reference>
<name>RL27_CHLPN</name>
<gene>
    <name evidence="1" type="primary">rpmA</name>
    <name type="synonym">rl27</name>
    <name type="ordered locus">CPn_0545</name>
    <name type="ordered locus">CP_0207</name>
    <name type="ordered locus">CpB0566</name>
</gene>
<sequence length="84" mass="9134">MAHKKGQGASRNGRDSKSKRLGVKVGAGQKVSTGSILVRQRGTRWNPAQNVGRGRDDTLFALVDGIVVMKKTNRTYISVVPEQL</sequence>
<comment type="similarity">
    <text evidence="1">Belongs to the bacterial ribosomal protein bL27 family.</text>
</comment>
<dbReference type="EMBL" id="AE001363">
    <property type="protein sequence ID" value="AAD18685.1"/>
    <property type="molecule type" value="Genomic_DNA"/>
</dbReference>
<dbReference type="EMBL" id="AE002161">
    <property type="protein sequence ID" value="AAF38078.1"/>
    <property type="molecule type" value="Genomic_DNA"/>
</dbReference>
<dbReference type="EMBL" id="BA000008">
    <property type="protein sequence ID" value="BAA98751.1"/>
    <property type="molecule type" value="Genomic_DNA"/>
</dbReference>
<dbReference type="EMBL" id="AE009440">
    <property type="protein sequence ID" value="AAP98495.1"/>
    <property type="molecule type" value="Genomic_DNA"/>
</dbReference>
<dbReference type="PIR" id="B72065">
    <property type="entry name" value="B72065"/>
</dbReference>
<dbReference type="PIR" id="E86558">
    <property type="entry name" value="E86558"/>
</dbReference>
<dbReference type="RefSeq" id="NP_224741.1">
    <property type="nucleotide sequence ID" value="NC_000922.1"/>
</dbReference>
<dbReference type="RefSeq" id="WP_010883183.1">
    <property type="nucleotide sequence ID" value="NZ_LN847257.1"/>
</dbReference>
<dbReference type="SMR" id="Q9Z807"/>
<dbReference type="STRING" id="406984.CPK_ORF01059"/>
<dbReference type="GeneID" id="45050588"/>
<dbReference type="KEGG" id="cpa:CP_0207"/>
<dbReference type="KEGG" id="cpj:rl27"/>
<dbReference type="KEGG" id="cpn:CPn_0545"/>
<dbReference type="KEGG" id="cpt:CpB0566"/>
<dbReference type="PATRIC" id="fig|115713.3.peg.605"/>
<dbReference type="eggNOG" id="COG0211">
    <property type="taxonomic scope" value="Bacteria"/>
</dbReference>
<dbReference type="HOGENOM" id="CLU_095424_4_0_0"/>
<dbReference type="OrthoDB" id="9803474at2"/>
<dbReference type="Proteomes" id="UP000000583">
    <property type="component" value="Chromosome"/>
</dbReference>
<dbReference type="Proteomes" id="UP000000801">
    <property type="component" value="Chromosome"/>
</dbReference>
<dbReference type="GO" id="GO:0022625">
    <property type="term" value="C:cytosolic large ribosomal subunit"/>
    <property type="evidence" value="ECO:0007669"/>
    <property type="project" value="TreeGrafter"/>
</dbReference>
<dbReference type="GO" id="GO:0003735">
    <property type="term" value="F:structural constituent of ribosome"/>
    <property type="evidence" value="ECO:0007669"/>
    <property type="project" value="InterPro"/>
</dbReference>
<dbReference type="GO" id="GO:0006412">
    <property type="term" value="P:translation"/>
    <property type="evidence" value="ECO:0007669"/>
    <property type="project" value="UniProtKB-UniRule"/>
</dbReference>
<dbReference type="FunFam" id="2.40.50.100:FF:000020">
    <property type="entry name" value="50S ribosomal protein L27"/>
    <property type="match status" value="1"/>
</dbReference>
<dbReference type="Gene3D" id="2.40.50.100">
    <property type="match status" value="1"/>
</dbReference>
<dbReference type="HAMAP" id="MF_00539">
    <property type="entry name" value="Ribosomal_bL27"/>
    <property type="match status" value="1"/>
</dbReference>
<dbReference type="InterPro" id="IPR001684">
    <property type="entry name" value="Ribosomal_bL27"/>
</dbReference>
<dbReference type="NCBIfam" id="TIGR00062">
    <property type="entry name" value="L27"/>
    <property type="match status" value="1"/>
</dbReference>
<dbReference type="PANTHER" id="PTHR15893:SF0">
    <property type="entry name" value="LARGE RIBOSOMAL SUBUNIT PROTEIN BL27M"/>
    <property type="match status" value="1"/>
</dbReference>
<dbReference type="PANTHER" id="PTHR15893">
    <property type="entry name" value="RIBOSOMAL PROTEIN L27"/>
    <property type="match status" value="1"/>
</dbReference>
<dbReference type="Pfam" id="PF01016">
    <property type="entry name" value="Ribosomal_L27"/>
    <property type="match status" value="1"/>
</dbReference>
<dbReference type="PRINTS" id="PR00063">
    <property type="entry name" value="RIBOSOMALL27"/>
</dbReference>
<dbReference type="SUPFAM" id="SSF110324">
    <property type="entry name" value="Ribosomal L27 protein-like"/>
    <property type="match status" value="1"/>
</dbReference>
<evidence type="ECO:0000255" key="1">
    <source>
        <dbReference type="HAMAP-Rule" id="MF_00539"/>
    </source>
</evidence>
<evidence type="ECO:0000256" key="2">
    <source>
        <dbReference type="SAM" id="MobiDB-lite"/>
    </source>
</evidence>
<evidence type="ECO:0000305" key="3"/>
<organism>
    <name type="scientific">Chlamydia pneumoniae</name>
    <name type="common">Chlamydophila pneumoniae</name>
    <dbReference type="NCBI Taxonomy" id="83558"/>
    <lineage>
        <taxon>Bacteria</taxon>
        <taxon>Pseudomonadati</taxon>
        <taxon>Chlamydiota</taxon>
        <taxon>Chlamydiia</taxon>
        <taxon>Chlamydiales</taxon>
        <taxon>Chlamydiaceae</taxon>
        <taxon>Chlamydia/Chlamydophila group</taxon>
        <taxon>Chlamydia</taxon>
    </lineage>
</organism>
<keyword id="KW-0687">Ribonucleoprotein</keyword>
<keyword id="KW-0689">Ribosomal protein</keyword>
<feature type="chain" id="PRO_0000181069" description="Large ribosomal subunit protein bL27">
    <location>
        <begin position="1"/>
        <end position="84"/>
    </location>
</feature>
<feature type="region of interest" description="Disordered" evidence="2">
    <location>
        <begin position="1"/>
        <end position="27"/>
    </location>
</feature>